<gene>
    <name type="primary">hisF1</name>
    <name type="ordered locus">SYNW1675</name>
</gene>
<sequence>MVALRLIPCLDVARGRVVKGVNFVGLRDAGDPVELACRYSGAGADELVFLDIAASHEGRGTLIDMVHRTAESVTIPFTVGGGISTVEGITDLLRAGADKVSLNSSAVRRPELVREGAERFGCQCIVVAIDARRRDGDGWDVFVKGGRENTGLDAVDWARRVAELGAGEILLTSMDGDGTQAGYDLALTRAVADAVPVPVIASGGAGCIDHIAQALETGPDGGHASAALLASLLHDGVLTVEEIKQDLLARGLSIRP</sequence>
<feature type="chain" id="PRO_0000142247" description="Imidazole glycerol phosphate synthase subunit hisF1">
    <location>
        <begin position="1"/>
        <end position="256"/>
    </location>
</feature>
<feature type="active site" evidence="2">
    <location>
        <position position="11"/>
    </location>
</feature>
<feature type="active site" evidence="2">
    <location>
        <position position="130"/>
    </location>
</feature>
<accession>Q7U5M8</accession>
<reference key="1">
    <citation type="journal article" date="2003" name="Nature">
        <title>The genome of a motile marine Synechococcus.</title>
        <authorList>
            <person name="Palenik B."/>
            <person name="Brahamsha B."/>
            <person name="Larimer F.W."/>
            <person name="Land M.L."/>
            <person name="Hauser L."/>
            <person name="Chain P."/>
            <person name="Lamerdin J.E."/>
            <person name="Regala W."/>
            <person name="Allen E.E."/>
            <person name="McCarren J."/>
            <person name="Paulsen I.T."/>
            <person name="Dufresne A."/>
            <person name="Partensky F."/>
            <person name="Webb E.A."/>
            <person name="Waterbury J."/>
        </authorList>
    </citation>
    <scope>NUCLEOTIDE SEQUENCE [LARGE SCALE GENOMIC DNA]</scope>
    <source>
        <strain>WH8102</strain>
    </source>
</reference>
<keyword id="KW-0028">Amino-acid biosynthesis</keyword>
<keyword id="KW-0963">Cytoplasm</keyword>
<keyword id="KW-0368">Histidine biosynthesis</keyword>
<keyword id="KW-0456">Lyase</keyword>
<protein>
    <recommendedName>
        <fullName>Imidazole glycerol phosphate synthase subunit hisF1</fullName>
        <ecNumber>4.3.2.10</ecNumber>
    </recommendedName>
    <alternativeName>
        <fullName>IGP synthase cyclase subunit</fullName>
    </alternativeName>
    <alternativeName>
        <fullName>IGP synthase subunit hisF1</fullName>
    </alternativeName>
    <alternativeName>
        <fullName>ImGP synthase subunit hisF1</fullName>
        <shortName>IGPS subunit hisF1</shortName>
    </alternativeName>
</protein>
<name>HIS61_PARMW</name>
<comment type="function">
    <text evidence="1">IGPS catalyzes the conversion of PRFAR and glutamine to IGP, AICAR and glutamate. The HisF subunit catalyzes the cyclization activity that produces IGP and AICAR from PRFAR using the ammonia provided by the HisH subunit (By similarity).</text>
</comment>
<comment type="catalytic activity">
    <reaction>
        <text>5-[(5-phospho-1-deoxy-D-ribulos-1-ylimino)methylamino]-1-(5-phospho-beta-D-ribosyl)imidazole-4-carboxamide + L-glutamine = D-erythro-1-(imidazol-4-yl)glycerol 3-phosphate + 5-amino-1-(5-phospho-beta-D-ribosyl)imidazole-4-carboxamide + L-glutamate + H(+)</text>
        <dbReference type="Rhea" id="RHEA:24793"/>
        <dbReference type="ChEBI" id="CHEBI:15378"/>
        <dbReference type="ChEBI" id="CHEBI:29985"/>
        <dbReference type="ChEBI" id="CHEBI:58278"/>
        <dbReference type="ChEBI" id="CHEBI:58359"/>
        <dbReference type="ChEBI" id="CHEBI:58475"/>
        <dbReference type="ChEBI" id="CHEBI:58525"/>
        <dbReference type="EC" id="4.3.2.10"/>
    </reaction>
</comment>
<comment type="pathway">
    <text>Amino-acid biosynthesis; L-histidine biosynthesis; L-histidine from 5-phospho-alpha-D-ribose 1-diphosphate: step 5/9.</text>
</comment>
<comment type="subunit">
    <text evidence="1">Heterodimer of HisH and HisF.</text>
</comment>
<comment type="subcellular location">
    <subcellularLocation>
        <location evidence="1">Cytoplasm</location>
    </subcellularLocation>
</comment>
<comment type="similarity">
    <text evidence="3">Belongs to the HisA/HisF family.</text>
</comment>
<evidence type="ECO:0000250" key="1"/>
<evidence type="ECO:0000255" key="2"/>
<evidence type="ECO:0000305" key="3"/>
<proteinExistence type="inferred from homology"/>
<dbReference type="EC" id="4.3.2.10"/>
<dbReference type="EMBL" id="BX569693">
    <property type="protein sequence ID" value="CAE08190.1"/>
    <property type="molecule type" value="Genomic_DNA"/>
</dbReference>
<dbReference type="RefSeq" id="WP_011128537.1">
    <property type="nucleotide sequence ID" value="NC_005070.1"/>
</dbReference>
<dbReference type="SMR" id="Q7U5M8"/>
<dbReference type="STRING" id="84588.SYNW1675"/>
<dbReference type="KEGG" id="syw:SYNW1675"/>
<dbReference type="eggNOG" id="COG0107">
    <property type="taxonomic scope" value="Bacteria"/>
</dbReference>
<dbReference type="HOGENOM" id="CLU_048577_4_0_3"/>
<dbReference type="UniPathway" id="UPA00031">
    <property type="reaction ID" value="UER00010"/>
</dbReference>
<dbReference type="Proteomes" id="UP000001422">
    <property type="component" value="Chromosome"/>
</dbReference>
<dbReference type="GO" id="GO:0005737">
    <property type="term" value="C:cytoplasm"/>
    <property type="evidence" value="ECO:0007669"/>
    <property type="project" value="UniProtKB-SubCell"/>
</dbReference>
<dbReference type="GO" id="GO:0000107">
    <property type="term" value="F:imidazoleglycerol-phosphate synthase activity"/>
    <property type="evidence" value="ECO:0007669"/>
    <property type="project" value="UniProtKB-UniRule"/>
</dbReference>
<dbReference type="GO" id="GO:0016829">
    <property type="term" value="F:lyase activity"/>
    <property type="evidence" value="ECO:0007669"/>
    <property type="project" value="UniProtKB-KW"/>
</dbReference>
<dbReference type="GO" id="GO:0000105">
    <property type="term" value="P:L-histidine biosynthetic process"/>
    <property type="evidence" value="ECO:0007669"/>
    <property type="project" value="UniProtKB-UniRule"/>
</dbReference>
<dbReference type="CDD" id="cd04731">
    <property type="entry name" value="HisF"/>
    <property type="match status" value="1"/>
</dbReference>
<dbReference type="FunFam" id="3.20.20.70:FF:000006">
    <property type="entry name" value="Imidazole glycerol phosphate synthase subunit HisF"/>
    <property type="match status" value="1"/>
</dbReference>
<dbReference type="Gene3D" id="3.20.20.70">
    <property type="entry name" value="Aldolase class I"/>
    <property type="match status" value="1"/>
</dbReference>
<dbReference type="HAMAP" id="MF_01013">
    <property type="entry name" value="HisF"/>
    <property type="match status" value="1"/>
</dbReference>
<dbReference type="InterPro" id="IPR013785">
    <property type="entry name" value="Aldolase_TIM"/>
</dbReference>
<dbReference type="InterPro" id="IPR006062">
    <property type="entry name" value="His_biosynth"/>
</dbReference>
<dbReference type="InterPro" id="IPR004651">
    <property type="entry name" value="HisF"/>
</dbReference>
<dbReference type="InterPro" id="IPR050064">
    <property type="entry name" value="IGPS_HisA/HisF"/>
</dbReference>
<dbReference type="InterPro" id="IPR011060">
    <property type="entry name" value="RibuloseP-bd_barrel"/>
</dbReference>
<dbReference type="NCBIfam" id="TIGR00735">
    <property type="entry name" value="hisF"/>
    <property type="match status" value="1"/>
</dbReference>
<dbReference type="PANTHER" id="PTHR21235:SF2">
    <property type="entry name" value="IMIDAZOLE GLYCEROL PHOSPHATE SYNTHASE HISHF"/>
    <property type="match status" value="1"/>
</dbReference>
<dbReference type="PANTHER" id="PTHR21235">
    <property type="entry name" value="IMIDAZOLE GLYCEROL PHOSPHATE SYNTHASE SUBUNIT HISF/H IGP SYNTHASE SUBUNIT HISF/H"/>
    <property type="match status" value="1"/>
</dbReference>
<dbReference type="Pfam" id="PF00977">
    <property type="entry name" value="His_biosynth"/>
    <property type="match status" value="1"/>
</dbReference>
<dbReference type="SUPFAM" id="SSF51366">
    <property type="entry name" value="Ribulose-phoshate binding barrel"/>
    <property type="match status" value="1"/>
</dbReference>
<organism>
    <name type="scientific">Parasynechococcus marenigrum (strain WH8102)</name>
    <dbReference type="NCBI Taxonomy" id="84588"/>
    <lineage>
        <taxon>Bacteria</taxon>
        <taxon>Bacillati</taxon>
        <taxon>Cyanobacteriota</taxon>
        <taxon>Cyanophyceae</taxon>
        <taxon>Synechococcales</taxon>
        <taxon>Prochlorococcaceae</taxon>
        <taxon>Parasynechococcus</taxon>
        <taxon>Parasynechococcus marenigrum</taxon>
    </lineage>
</organism>